<accession>Q31CU1</accession>
<reference key="1">
    <citation type="journal article" date="2006" name="Science">
        <title>Genomic islands and the ecology and evolution of Prochlorococcus.</title>
        <authorList>
            <person name="Coleman M.L."/>
            <person name="Sullivan M.B."/>
            <person name="Martiny A.C."/>
            <person name="Steglich C."/>
            <person name="Barry K."/>
            <person name="Delong E.F."/>
            <person name="Chisholm S.W."/>
        </authorList>
    </citation>
    <scope>NUCLEOTIDE SEQUENCE [LARGE SCALE GENOMIC DNA]</scope>
    <source>
        <strain>MIT 9312</strain>
    </source>
</reference>
<organism>
    <name type="scientific">Prochlorococcus marinus (strain MIT 9312)</name>
    <dbReference type="NCBI Taxonomy" id="74546"/>
    <lineage>
        <taxon>Bacteria</taxon>
        <taxon>Bacillati</taxon>
        <taxon>Cyanobacteriota</taxon>
        <taxon>Cyanophyceae</taxon>
        <taxon>Synechococcales</taxon>
        <taxon>Prochlorococcaceae</taxon>
        <taxon>Prochlorococcus</taxon>
    </lineage>
</organism>
<keyword id="KW-0413">Isomerase</keyword>
<keyword id="KW-0460">Magnesium</keyword>
<keyword id="KW-0479">Metal-binding</keyword>
<keyword id="KW-0597">Phosphoprotein</keyword>
<comment type="function">
    <text evidence="1">Catalyzes the conversion of glucosamine-6-phosphate to glucosamine-1-phosphate.</text>
</comment>
<comment type="catalytic activity">
    <reaction evidence="1">
        <text>alpha-D-glucosamine 1-phosphate = D-glucosamine 6-phosphate</text>
        <dbReference type="Rhea" id="RHEA:23424"/>
        <dbReference type="ChEBI" id="CHEBI:58516"/>
        <dbReference type="ChEBI" id="CHEBI:58725"/>
        <dbReference type="EC" id="5.4.2.10"/>
    </reaction>
</comment>
<comment type="cofactor">
    <cofactor evidence="1">
        <name>Mg(2+)</name>
        <dbReference type="ChEBI" id="CHEBI:18420"/>
    </cofactor>
    <text evidence="1">Binds 1 Mg(2+) ion per subunit.</text>
</comment>
<comment type="PTM">
    <text evidence="1">Activated by phosphorylation.</text>
</comment>
<comment type="similarity">
    <text evidence="1">Belongs to the phosphohexose mutase family.</text>
</comment>
<protein>
    <recommendedName>
        <fullName evidence="1">Phosphoglucosamine mutase</fullName>
        <ecNumber evidence="1">5.4.2.10</ecNumber>
    </recommendedName>
</protein>
<proteinExistence type="inferred from homology"/>
<sequence>MQSIFGTDGIRGRFNEEITYSLAYKVGYALGSNLENNNPILIGRDTRISGDILLHAITKGINASGKKFINLGICPTPAIPFLIKQEQLSSGIMISASHNPPEYNGIKIFDHNGQKITKNFENKIQKFIEESNQNISVTTKEISLKANKELMDIYMKSLIQSMGGENLSGMKIILDTCYGSATTCAKKIFQSLGADVRVLNNSKNGLKINVNCGSTNLEPLKKALRQSPADMGFSFDGDSDRVIGLDSKGNVLDGDHILFLWGRELMEQKILTNNLLISTQMANLGFEEAWNKIGGLLYRTDVGDKYVHDAIKEKRAVLGGEQSGHILSKINNFSGDGILTALQISKYCKKKNITLNNWLKTSFEPFPQKLTNINLNFNINKVNQKTRILINQTTENFQKIYSDNCRIYIRPSGTEPLMRVLVEAKSHKKVDSLSSEIANKLILEINKIMN</sequence>
<name>GLMM_PROM9</name>
<feature type="chain" id="PRO_0000305662" description="Phosphoglucosamine mutase">
    <location>
        <begin position="1"/>
        <end position="450"/>
    </location>
</feature>
<feature type="active site" description="Phosphoserine intermediate" evidence="1">
    <location>
        <position position="97"/>
    </location>
</feature>
<feature type="binding site" description="via phosphate group" evidence="1">
    <location>
        <position position="97"/>
    </location>
    <ligand>
        <name>Mg(2+)</name>
        <dbReference type="ChEBI" id="CHEBI:18420"/>
    </ligand>
</feature>
<feature type="binding site" evidence="1">
    <location>
        <position position="236"/>
    </location>
    <ligand>
        <name>Mg(2+)</name>
        <dbReference type="ChEBI" id="CHEBI:18420"/>
    </ligand>
</feature>
<feature type="binding site" evidence="1">
    <location>
        <position position="238"/>
    </location>
    <ligand>
        <name>Mg(2+)</name>
        <dbReference type="ChEBI" id="CHEBI:18420"/>
    </ligand>
</feature>
<feature type="binding site" evidence="1">
    <location>
        <position position="240"/>
    </location>
    <ligand>
        <name>Mg(2+)</name>
        <dbReference type="ChEBI" id="CHEBI:18420"/>
    </ligand>
</feature>
<feature type="modified residue" description="Phosphoserine" evidence="1">
    <location>
        <position position="97"/>
    </location>
</feature>
<dbReference type="EC" id="5.4.2.10" evidence="1"/>
<dbReference type="EMBL" id="CP000111">
    <property type="protein sequence ID" value="ABB49304.1"/>
    <property type="molecule type" value="Genomic_DNA"/>
</dbReference>
<dbReference type="RefSeq" id="WP_011375808.1">
    <property type="nucleotide sequence ID" value="NC_007577.1"/>
</dbReference>
<dbReference type="SMR" id="Q31CU1"/>
<dbReference type="STRING" id="74546.PMT9312_0243"/>
<dbReference type="KEGG" id="pmi:PMT9312_0243"/>
<dbReference type="eggNOG" id="COG1109">
    <property type="taxonomic scope" value="Bacteria"/>
</dbReference>
<dbReference type="HOGENOM" id="CLU_016950_7_0_3"/>
<dbReference type="OrthoDB" id="9806956at2"/>
<dbReference type="Proteomes" id="UP000002715">
    <property type="component" value="Chromosome"/>
</dbReference>
<dbReference type="GO" id="GO:0005829">
    <property type="term" value="C:cytosol"/>
    <property type="evidence" value="ECO:0007669"/>
    <property type="project" value="TreeGrafter"/>
</dbReference>
<dbReference type="GO" id="GO:0000287">
    <property type="term" value="F:magnesium ion binding"/>
    <property type="evidence" value="ECO:0007669"/>
    <property type="project" value="UniProtKB-UniRule"/>
</dbReference>
<dbReference type="GO" id="GO:0008966">
    <property type="term" value="F:phosphoglucosamine mutase activity"/>
    <property type="evidence" value="ECO:0007669"/>
    <property type="project" value="UniProtKB-UniRule"/>
</dbReference>
<dbReference type="GO" id="GO:0004615">
    <property type="term" value="F:phosphomannomutase activity"/>
    <property type="evidence" value="ECO:0007669"/>
    <property type="project" value="TreeGrafter"/>
</dbReference>
<dbReference type="GO" id="GO:0005975">
    <property type="term" value="P:carbohydrate metabolic process"/>
    <property type="evidence" value="ECO:0007669"/>
    <property type="project" value="InterPro"/>
</dbReference>
<dbReference type="GO" id="GO:0009252">
    <property type="term" value="P:peptidoglycan biosynthetic process"/>
    <property type="evidence" value="ECO:0007669"/>
    <property type="project" value="TreeGrafter"/>
</dbReference>
<dbReference type="GO" id="GO:0006048">
    <property type="term" value="P:UDP-N-acetylglucosamine biosynthetic process"/>
    <property type="evidence" value="ECO:0007669"/>
    <property type="project" value="TreeGrafter"/>
</dbReference>
<dbReference type="CDD" id="cd05802">
    <property type="entry name" value="GlmM"/>
    <property type="match status" value="1"/>
</dbReference>
<dbReference type="FunFam" id="3.40.120.10:FF:000001">
    <property type="entry name" value="Phosphoglucosamine mutase"/>
    <property type="match status" value="1"/>
</dbReference>
<dbReference type="Gene3D" id="3.40.120.10">
    <property type="entry name" value="Alpha-D-Glucose-1,6-Bisphosphate, subunit A, domain 3"/>
    <property type="match status" value="3"/>
</dbReference>
<dbReference type="Gene3D" id="3.30.310.50">
    <property type="entry name" value="Alpha-D-phosphohexomutase, C-terminal domain"/>
    <property type="match status" value="1"/>
</dbReference>
<dbReference type="HAMAP" id="MF_01554_B">
    <property type="entry name" value="GlmM_B"/>
    <property type="match status" value="1"/>
</dbReference>
<dbReference type="InterPro" id="IPR005844">
    <property type="entry name" value="A-D-PHexomutase_a/b/a-I"/>
</dbReference>
<dbReference type="InterPro" id="IPR016055">
    <property type="entry name" value="A-D-PHexomutase_a/b/a-I/II/III"/>
</dbReference>
<dbReference type="InterPro" id="IPR005845">
    <property type="entry name" value="A-D-PHexomutase_a/b/a-II"/>
</dbReference>
<dbReference type="InterPro" id="IPR005846">
    <property type="entry name" value="A-D-PHexomutase_a/b/a-III"/>
</dbReference>
<dbReference type="InterPro" id="IPR005843">
    <property type="entry name" value="A-D-PHexomutase_C"/>
</dbReference>
<dbReference type="InterPro" id="IPR036900">
    <property type="entry name" value="A-D-PHexomutase_C_sf"/>
</dbReference>
<dbReference type="InterPro" id="IPR016066">
    <property type="entry name" value="A-D-PHexomutase_CS"/>
</dbReference>
<dbReference type="InterPro" id="IPR005841">
    <property type="entry name" value="Alpha-D-phosphohexomutase_SF"/>
</dbReference>
<dbReference type="InterPro" id="IPR006352">
    <property type="entry name" value="GlmM_bact"/>
</dbReference>
<dbReference type="InterPro" id="IPR050060">
    <property type="entry name" value="Phosphoglucosamine_mutase"/>
</dbReference>
<dbReference type="PANTHER" id="PTHR42946:SF1">
    <property type="entry name" value="PHOSPHOGLUCOMUTASE (ALPHA-D-GLUCOSE-1,6-BISPHOSPHATE-DEPENDENT)"/>
    <property type="match status" value="1"/>
</dbReference>
<dbReference type="PANTHER" id="PTHR42946">
    <property type="entry name" value="PHOSPHOHEXOSE MUTASE"/>
    <property type="match status" value="1"/>
</dbReference>
<dbReference type="Pfam" id="PF02878">
    <property type="entry name" value="PGM_PMM_I"/>
    <property type="match status" value="1"/>
</dbReference>
<dbReference type="Pfam" id="PF02879">
    <property type="entry name" value="PGM_PMM_II"/>
    <property type="match status" value="1"/>
</dbReference>
<dbReference type="Pfam" id="PF02880">
    <property type="entry name" value="PGM_PMM_III"/>
    <property type="match status" value="1"/>
</dbReference>
<dbReference type="Pfam" id="PF00408">
    <property type="entry name" value="PGM_PMM_IV"/>
    <property type="match status" value="1"/>
</dbReference>
<dbReference type="PRINTS" id="PR00509">
    <property type="entry name" value="PGMPMM"/>
</dbReference>
<dbReference type="SUPFAM" id="SSF55957">
    <property type="entry name" value="Phosphoglucomutase, C-terminal domain"/>
    <property type="match status" value="1"/>
</dbReference>
<dbReference type="SUPFAM" id="SSF53738">
    <property type="entry name" value="Phosphoglucomutase, first 3 domains"/>
    <property type="match status" value="3"/>
</dbReference>
<dbReference type="PROSITE" id="PS00710">
    <property type="entry name" value="PGM_PMM"/>
    <property type="match status" value="1"/>
</dbReference>
<evidence type="ECO:0000255" key="1">
    <source>
        <dbReference type="HAMAP-Rule" id="MF_01554"/>
    </source>
</evidence>
<gene>
    <name evidence="1" type="primary">glmM</name>
    <name type="ordered locus">PMT9312_0243</name>
</gene>